<gene>
    <name evidence="1" type="primary">ccsA</name>
</gene>
<geneLocation type="chloroplast"/>
<comment type="function">
    <text evidence="1">Required during biogenesis of c-type cytochromes (cytochrome c6 and cytochrome f) at the step of heme attachment.</text>
</comment>
<comment type="subunit">
    <text evidence="1">May interact with Ccs1.</text>
</comment>
<comment type="subcellular location">
    <subcellularLocation>
        <location evidence="1">Plastid</location>
        <location evidence="1">Chloroplast thylakoid membrane</location>
        <topology evidence="1">Multi-pass membrane protein</topology>
    </subcellularLocation>
</comment>
<comment type="similarity">
    <text evidence="1">Belongs to the CcmF/CycK/Ccl1/NrfE/CcsA family.</text>
</comment>
<proteinExistence type="inferred from homology"/>
<protein>
    <recommendedName>
        <fullName evidence="1">Cytochrome c biogenesis protein CcsA</fullName>
    </recommendedName>
</protein>
<accession>Q06GU7</accession>
<reference key="1">
    <citation type="journal article" date="2006" name="BMC Evol. Biol.">
        <title>Complete plastid genome sequences of Drimys, Liriodendron, and Piper: implications for the phylogenetic relationships of magnoliids.</title>
        <authorList>
            <person name="Cai Z."/>
            <person name="Penaflor C."/>
            <person name="Kuehl J.V."/>
            <person name="Leebens-Mack J."/>
            <person name="Carlson J.E."/>
            <person name="dePamphilis C.W."/>
            <person name="Boore J.L."/>
            <person name="Jansen R.K."/>
        </authorList>
    </citation>
    <scope>NUCLEOTIDE SEQUENCE [LARGE SCALE GENOMIC DNA]</scope>
</reference>
<keyword id="KW-0150">Chloroplast</keyword>
<keyword id="KW-0201">Cytochrome c-type biogenesis</keyword>
<keyword id="KW-0472">Membrane</keyword>
<keyword id="KW-0934">Plastid</keyword>
<keyword id="KW-0793">Thylakoid</keyword>
<keyword id="KW-0812">Transmembrane</keyword>
<keyword id="KW-1133">Transmembrane helix</keyword>
<feature type="chain" id="PRO_0000353751" description="Cytochrome c biogenesis protein CcsA">
    <location>
        <begin position="1"/>
        <end position="321"/>
    </location>
</feature>
<feature type="transmembrane region" description="Helical" evidence="1">
    <location>
        <begin position="17"/>
        <end position="37"/>
    </location>
</feature>
<feature type="transmembrane region" description="Helical" evidence="1">
    <location>
        <begin position="43"/>
        <end position="63"/>
    </location>
</feature>
<feature type="transmembrane region" description="Helical" evidence="1">
    <location>
        <begin position="143"/>
        <end position="163"/>
    </location>
</feature>
<feature type="transmembrane region" description="Helical" evidence="1">
    <location>
        <begin position="225"/>
        <end position="245"/>
    </location>
</feature>
<feature type="transmembrane region" description="Helical" evidence="1">
    <location>
        <begin position="258"/>
        <end position="275"/>
    </location>
</feature>
<feature type="transmembrane region" description="Helical" evidence="1">
    <location>
        <begin position="287"/>
        <end position="307"/>
    </location>
</feature>
<dbReference type="EMBL" id="DQ887676">
    <property type="protein sequence ID" value="ABH88347.1"/>
    <property type="molecule type" value="Genomic_DNA"/>
</dbReference>
<dbReference type="RefSeq" id="YP_784436.1">
    <property type="nucleotide sequence ID" value="NC_008456.1"/>
</dbReference>
<dbReference type="SMR" id="Q06GU7"/>
<dbReference type="GeneID" id="4363557"/>
<dbReference type="GO" id="GO:0009535">
    <property type="term" value="C:chloroplast thylakoid membrane"/>
    <property type="evidence" value="ECO:0007669"/>
    <property type="project" value="UniProtKB-SubCell"/>
</dbReference>
<dbReference type="GO" id="GO:0005886">
    <property type="term" value="C:plasma membrane"/>
    <property type="evidence" value="ECO:0007669"/>
    <property type="project" value="TreeGrafter"/>
</dbReference>
<dbReference type="GO" id="GO:0020037">
    <property type="term" value="F:heme binding"/>
    <property type="evidence" value="ECO:0007669"/>
    <property type="project" value="InterPro"/>
</dbReference>
<dbReference type="GO" id="GO:0017004">
    <property type="term" value="P:cytochrome complex assembly"/>
    <property type="evidence" value="ECO:0007669"/>
    <property type="project" value="UniProtKB-UniRule"/>
</dbReference>
<dbReference type="HAMAP" id="MF_01391">
    <property type="entry name" value="CytC_CcsA"/>
    <property type="match status" value="1"/>
</dbReference>
<dbReference type="InterPro" id="IPR002541">
    <property type="entry name" value="Cyt_c_assembly"/>
</dbReference>
<dbReference type="InterPro" id="IPR017562">
    <property type="entry name" value="Cyt_c_biogenesis_CcsA"/>
</dbReference>
<dbReference type="InterPro" id="IPR045062">
    <property type="entry name" value="Cyt_c_biogenesis_CcsA/CcmC"/>
</dbReference>
<dbReference type="NCBIfam" id="TIGR03144">
    <property type="entry name" value="cytochr_II_ccsB"/>
    <property type="match status" value="1"/>
</dbReference>
<dbReference type="PANTHER" id="PTHR30071:SF1">
    <property type="entry name" value="CYTOCHROME B_B6 PROTEIN-RELATED"/>
    <property type="match status" value="1"/>
</dbReference>
<dbReference type="PANTHER" id="PTHR30071">
    <property type="entry name" value="HEME EXPORTER PROTEIN C"/>
    <property type="match status" value="1"/>
</dbReference>
<dbReference type="Pfam" id="PF01578">
    <property type="entry name" value="Cytochrom_C_asm"/>
    <property type="match status" value="1"/>
</dbReference>
<name>CCSA_DRIGR</name>
<evidence type="ECO:0000255" key="1">
    <source>
        <dbReference type="HAMAP-Rule" id="MF_01391"/>
    </source>
</evidence>
<organism>
    <name type="scientific">Drimys granadensis</name>
    <dbReference type="NCBI Taxonomy" id="224735"/>
    <lineage>
        <taxon>Eukaryota</taxon>
        <taxon>Viridiplantae</taxon>
        <taxon>Streptophyta</taxon>
        <taxon>Embryophyta</taxon>
        <taxon>Tracheophyta</taxon>
        <taxon>Spermatophyta</taxon>
        <taxon>Magnoliopsida</taxon>
        <taxon>Magnoliidae</taxon>
        <taxon>Canellales</taxon>
        <taxon>Winteraceae</taxon>
        <taxon>Drimys</taxon>
    </lineage>
</organism>
<sequence length="321" mass="36363">MIFATLEHILTHISFSIISIVITIQLIDLLVYQIVGICDSSEKGIIATFFCITGLLITRWIYSRHFPLSDLYESLMFLSWSFSIIHMVPKAGNHKNDLSAITGPSAIFTQGFATSDLLTEMHQSAILVPALQSQWLMMHVSMMLLSYAALLCGALLSVAFLVITFRKNTDIAVKSNYLLIGTFSFGEIQYLNEKRSVLQNTSFPSFRNYHRYRLTQRLDHWSYRVISLGFIFSTIGILSGAVWANEAWGSYWNWDPKETWAFITWTIFAIYLHTRTNQSLQGVNSSIVASIGFLIIWICYFGVNLLGIGLHSYGSFTLTAN</sequence>